<accession>Q38953</accession>
<accession>Q9LRV0</accession>
<name>DEAH5_ARATH</name>
<dbReference type="EC" id="3.6.4.13"/>
<dbReference type="EMBL" id="X98130">
    <property type="protein sequence ID" value="CAA66825.1"/>
    <property type="status" value="ALT_FRAME"/>
    <property type="molecule type" value="Genomic_DNA"/>
</dbReference>
<dbReference type="EMBL" id="X97970">
    <property type="protein sequence ID" value="CAA66613.1"/>
    <property type="status" value="ALT_FRAME"/>
    <property type="molecule type" value="mRNA"/>
</dbReference>
<dbReference type="EMBL" id="AB028611">
    <property type="protein sequence ID" value="BAB01838.1"/>
    <property type="molecule type" value="Genomic_DNA"/>
</dbReference>
<dbReference type="EMBL" id="CP002686">
    <property type="protein sequence ID" value="AEE77178.1"/>
    <property type="molecule type" value="Genomic_DNA"/>
</dbReference>
<dbReference type="RefSeq" id="NP_189288.1">
    <property type="nucleotide sequence ID" value="NM_113564.4"/>
</dbReference>
<dbReference type="SMR" id="Q38953"/>
<dbReference type="BioGRID" id="7595">
    <property type="interactions" value="2"/>
</dbReference>
<dbReference type="FunCoup" id="Q38953">
    <property type="interactions" value="4073"/>
</dbReference>
<dbReference type="STRING" id="3702.Q38953"/>
<dbReference type="iPTMnet" id="Q38953"/>
<dbReference type="PaxDb" id="3702-AT3G26560.1"/>
<dbReference type="ProteomicsDB" id="224181"/>
<dbReference type="EnsemblPlants" id="AT3G26560.1">
    <property type="protein sequence ID" value="AT3G26560.1"/>
    <property type="gene ID" value="AT3G26560"/>
</dbReference>
<dbReference type="GeneID" id="822264"/>
<dbReference type="Gramene" id="AT3G26560.1">
    <property type="protein sequence ID" value="AT3G26560.1"/>
    <property type="gene ID" value="AT3G26560"/>
</dbReference>
<dbReference type="KEGG" id="ath:AT3G26560"/>
<dbReference type="Araport" id="AT3G26560"/>
<dbReference type="TAIR" id="AT3G26560"/>
<dbReference type="eggNOG" id="KOG0922">
    <property type="taxonomic scope" value="Eukaryota"/>
</dbReference>
<dbReference type="HOGENOM" id="CLU_001832_2_0_1"/>
<dbReference type="InParanoid" id="Q38953"/>
<dbReference type="OMA" id="MKEVDQV"/>
<dbReference type="OrthoDB" id="10253254at2759"/>
<dbReference type="PhylomeDB" id="Q38953"/>
<dbReference type="CD-CODE" id="4299E36E">
    <property type="entry name" value="Nucleolus"/>
</dbReference>
<dbReference type="PRO" id="PR:Q38953"/>
<dbReference type="Proteomes" id="UP000006548">
    <property type="component" value="Chromosome 3"/>
</dbReference>
<dbReference type="ExpressionAtlas" id="Q38953">
    <property type="expression patterns" value="baseline and differential"/>
</dbReference>
<dbReference type="GO" id="GO:0005739">
    <property type="term" value="C:mitochondrion"/>
    <property type="evidence" value="ECO:0007005"/>
    <property type="project" value="TAIR"/>
</dbReference>
<dbReference type="GO" id="GO:0009506">
    <property type="term" value="C:plasmodesma"/>
    <property type="evidence" value="ECO:0007005"/>
    <property type="project" value="TAIR"/>
</dbReference>
<dbReference type="GO" id="GO:0005681">
    <property type="term" value="C:spliceosomal complex"/>
    <property type="evidence" value="ECO:0007669"/>
    <property type="project" value="UniProtKB-KW"/>
</dbReference>
<dbReference type="GO" id="GO:0005524">
    <property type="term" value="F:ATP binding"/>
    <property type="evidence" value="ECO:0007669"/>
    <property type="project" value="UniProtKB-KW"/>
</dbReference>
<dbReference type="GO" id="GO:0016887">
    <property type="term" value="F:ATP hydrolysis activity"/>
    <property type="evidence" value="ECO:0007669"/>
    <property type="project" value="RHEA"/>
</dbReference>
<dbReference type="GO" id="GO:0003729">
    <property type="term" value="F:mRNA binding"/>
    <property type="evidence" value="ECO:0007005"/>
    <property type="project" value="TAIR"/>
</dbReference>
<dbReference type="GO" id="GO:0003724">
    <property type="term" value="F:RNA helicase activity"/>
    <property type="evidence" value="ECO:0007669"/>
    <property type="project" value="UniProtKB-EC"/>
</dbReference>
<dbReference type="GO" id="GO:0000398">
    <property type="term" value="P:mRNA splicing, via spliceosome"/>
    <property type="evidence" value="ECO:0007669"/>
    <property type="project" value="InterPro"/>
</dbReference>
<dbReference type="CDD" id="cd17971">
    <property type="entry name" value="DEXHc_DHX8"/>
    <property type="match status" value="1"/>
</dbReference>
<dbReference type="CDD" id="cd21691">
    <property type="entry name" value="GH2-like_DHX8"/>
    <property type="match status" value="1"/>
</dbReference>
<dbReference type="CDD" id="cd05684">
    <property type="entry name" value="S1_DHX8_helicase"/>
    <property type="match status" value="1"/>
</dbReference>
<dbReference type="CDD" id="cd18791">
    <property type="entry name" value="SF2_C_RHA"/>
    <property type="match status" value="1"/>
</dbReference>
<dbReference type="FunFam" id="2.40.50.140:FF:000061">
    <property type="entry name" value="ATP-dependent RNA helicase DHX8"/>
    <property type="match status" value="1"/>
</dbReference>
<dbReference type="FunFam" id="1.20.120.1080:FF:000001">
    <property type="entry name" value="Pre-mRNA-splicing factor ATP-dependent RNA helicase"/>
    <property type="match status" value="1"/>
</dbReference>
<dbReference type="FunFam" id="3.40.50.300:FF:000101">
    <property type="entry name" value="Pre-mRNA-splicing factor ATP-dependent RNA helicase"/>
    <property type="match status" value="1"/>
</dbReference>
<dbReference type="FunFam" id="3.40.50.300:FF:000191">
    <property type="entry name" value="Pre-mRNA-splicing factor ATP-dependent RNA helicase"/>
    <property type="match status" value="1"/>
</dbReference>
<dbReference type="Gene3D" id="1.20.120.1080">
    <property type="match status" value="1"/>
</dbReference>
<dbReference type="Gene3D" id="2.40.50.140">
    <property type="entry name" value="Nucleic acid-binding proteins"/>
    <property type="match status" value="1"/>
</dbReference>
<dbReference type="Gene3D" id="3.40.50.300">
    <property type="entry name" value="P-loop containing nucleotide triphosphate hydrolases"/>
    <property type="match status" value="2"/>
</dbReference>
<dbReference type="InterPro" id="IPR011709">
    <property type="entry name" value="DEAD-box_helicase_OB_fold"/>
</dbReference>
<dbReference type="InterPro" id="IPR011545">
    <property type="entry name" value="DEAD/DEAH_box_helicase_dom"/>
</dbReference>
<dbReference type="InterPro" id="IPR044762">
    <property type="entry name" value="DHX8/Prp22_DEXHc"/>
</dbReference>
<dbReference type="InterPro" id="IPR049588">
    <property type="entry name" value="DHX8_GH2-like"/>
</dbReference>
<dbReference type="InterPro" id="IPR002464">
    <property type="entry name" value="DNA/RNA_helicase_DEAH_CS"/>
</dbReference>
<dbReference type="InterPro" id="IPR048333">
    <property type="entry name" value="HA2_WH"/>
</dbReference>
<dbReference type="InterPro" id="IPR007502">
    <property type="entry name" value="Helicase-assoc_dom"/>
</dbReference>
<dbReference type="InterPro" id="IPR014001">
    <property type="entry name" value="Helicase_ATP-bd"/>
</dbReference>
<dbReference type="InterPro" id="IPR001650">
    <property type="entry name" value="Helicase_C-like"/>
</dbReference>
<dbReference type="InterPro" id="IPR012340">
    <property type="entry name" value="NA-bd_OB-fold"/>
</dbReference>
<dbReference type="InterPro" id="IPR027417">
    <property type="entry name" value="P-loop_NTPase"/>
</dbReference>
<dbReference type="InterPro" id="IPR049621">
    <property type="entry name" value="S1_DHX8_helicase"/>
</dbReference>
<dbReference type="InterPro" id="IPR003029">
    <property type="entry name" value="S1_domain"/>
</dbReference>
<dbReference type="PANTHER" id="PTHR18934">
    <property type="entry name" value="ATP-DEPENDENT RNA HELICASE"/>
    <property type="match status" value="1"/>
</dbReference>
<dbReference type="PANTHER" id="PTHR18934:SF85">
    <property type="entry name" value="ATP-DEPENDENT RNA HELICASE DHX8"/>
    <property type="match status" value="1"/>
</dbReference>
<dbReference type="Pfam" id="PF00270">
    <property type="entry name" value="DEAD"/>
    <property type="match status" value="1"/>
</dbReference>
<dbReference type="Pfam" id="PF21010">
    <property type="entry name" value="HA2_C"/>
    <property type="match status" value="1"/>
</dbReference>
<dbReference type="Pfam" id="PF04408">
    <property type="entry name" value="HA2_N"/>
    <property type="match status" value="1"/>
</dbReference>
<dbReference type="Pfam" id="PF00271">
    <property type="entry name" value="Helicase_C"/>
    <property type="match status" value="1"/>
</dbReference>
<dbReference type="Pfam" id="PF07717">
    <property type="entry name" value="OB_NTP_bind"/>
    <property type="match status" value="1"/>
</dbReference>
<dbReference type="Pfam" id="PF00575">
    <property type="entry name" value="S1"/>
    <property type="match status" value="1"/>
</dbReference>
<dbReference type="SMART" id="SM00487">
    <property type="entry name" value="DEXDc"/>
    <property type="match status" value="1"/>
</dbReference>
<dbReference type="SMART" id="SM00847">
    <property type="entry name" value="HA2"/>
    <property type="match status" value="1"/>
</dbReference>
<dbReference type="SMART" id="SM00490">
    <property type="entry name" value="HELICc"/>
    <property type="match status" value="1"/>
</dbReference>
<dbReference type="SMART" id="SM00316">
    <property type="entry name" value="S1"/>
    <property type="match status" value="1"/>
</dbReference>
<dbReference type="SUPFAM" id="SSF50249">
    <property type="entry name" value="Nucleic acid-binding proteins"/>
    <property type="match status" value="1"/>
</dbReference>
<dbReference type="SUPFAM" id="SSF52540">
    <property type="entry name" value="P-loop containing nucleoside triphosphate hydrolases"/>
    <property type="match status" value="1"/>
</dbReference>
<dbReference type="PROSITE" id="PS00690">
    <property type="entry name" value="DEAH_ATP_HELICASE"/>
    <property type="match status" value="1"/>
</dbReference>
<dbReference type="PROSITE" id="PS51192">
    <property type="entry name" value="HELICASE_ATP_BIND_1"/>
    <property type="match status" value="1"/>
</dbReference>
<dbReference type="PROSITE" id="PS51194">
    <property type="entry name" value="HELICASE_CTER"/>
    <property type="match status" value="1"/>
</dbReference>
<dbReference type="PROSITE" id="PS50126">
    <property type="entry name" value="S1"/>
    <property type="match status" value="1"/>
</dbReference>
<proteinExistence type="evidence at protein level"/>
<protein>
    <recommendedName>
        <fullName evidence="7">Probable pre-mRNA-splicing factor ATP-dependent RNA helicase DEAH5</fullName>
        <ecNumber>3.6.4.13</ecNumber>
    </recommendedName>
    <alternativeName>
        <fullName evidence="6">DEAH RNA helicase homolog PRP22</fullName>
    </alternativeName>
</protein>
<sequence length="1168" mass="134157">MEKEELNKLNHLSLVSNVCNELETHLGSAEKVLAEFIIDLGRHSETVDEFDKNLKEAGAEMPDYFVRSLLTTIHGIYPPKPKSEKKKEEGDDQKFKGLAIKDTKDKVKELEKEIEREAEERRREEDRNRDRDRRESGRDRDRDRNRDRDDRRDRHRDRERNRGDEEGEDRRSDRRHRERGRGDGGEGEDRRRDRRAKDEYVEEDKGGANEPELYQVYKGRVTRVMDAGCFVQFDKFRGKEGLVHVSQMATRRVDKAKEFVKRDMEVYVKVISISSDKYSLSMRDVDQNTGRDLIPLRKPSDEDDSSRSNPSYRTKDGQVTKTGISGIRIVEENDVAPSRRPLKKMSSPERWEAKQLIASGVLRVDEFPMYDEDGDGMLYQEEGAEEELEIEMNEDEPAFLQGQTRYSVDMSPVKIFKNPEGSLSRAAALQSALTKERREMREQQQRTMLDSIPKDLNRPWEDPMPETGERHLAQELRGVGLSAYDMPEWKKDAFGKTPTFGQRSKLSIQEQRESLPIYKLKKELIQAVHDNQVLVVIGETGSGKTTQVTQYLAEAGYTTKGKIGCTQPRRVAAMSVAKRVAEEFGCRLGEEVGYAIRFEDCTGPDTVIKYMTDGMLLREILIDENLSQYSVIMLDEAHERTIHTDVLFGLLKKLMKRRLDLRLIVTSATLDAEKFSGYFFNCNIFTIPGRTFPVEILYTKQPETDYLDAALITVLQIHLTEPEGDILVFLTGQEEIDSACQSLYERMKGLGKNVPELIILPVYSALPSEMQSRIFDPPPPGKRKVVVATNIAEASLTIDGIYYVVDPGFAKQNVYNPKQGLESLVITPISQASAKQRAGRAGRTGPGKCYRLYTESAYRNEMPPTSIPEIQRINLGMTTLTMKAMGINDLLSFDFMDPPQPQALISAMEQLYSLGALDEEGLLTKLGRKMAEFPLEPPLSKMLLASVDLGCSDEILTMIAMIQTGNIFYRPREKQAQADQKRAKFFQPEGDHLTLLAVYEAWKAKNFSGPWCFENFIQSRSLRRAQDVRKQLLSIMDKYKLDVVTAGKNFTKIRKAITAGFFFHGARKDPQEGYRTLVENQPVYIHPSSALFQRQPDWVIYHDLVMTTKEYMREVTVIDPKWLVELAPRFFKVSDPTKMSKRKRQERIEPLYDRYHEPNSWRLSKRRA</sequence>
<reference key="1">
    <citation type="journal article" date="1996" name="Nucleic Acids Res.">
        <title>Sequence analysis of an 81 kb contig from Arabidopsis thaliana chromosome III.</title>
        <authorList>
            <person name="Quigley F."/>
            <person name="Dao P."/>
            <person name="Cottet A."/>
            <person name="Mache R."/>
        </authorList>
    </citation>
    <scope>NUCLEOTIDE SEQUENCE [GENOMIC DNA / MRNA]</scope>
    <source>
        <strain>cv. Columbia</strain>
        <tissue>Shoot</tissue>
    </source>
</reference>
<reference key="2">
    <citation type="journal article" date="2000" name="DNA Res.">
        <title>Structural analysis of Arabidopsis thaliana chromosome 3. I. Sequence features of the regions of 4,504,864 bp covered by sixty P1 and TAC clones.</title>
        <authorList>
            <person name="Sato S."/>
            <person name="Nakamura Y."/>
            <person name="Kaneko T."/>
            <person name="Katoh T."/>
            <person name="Asamizu E."/>
            <person name="Tabata S."/>
        </authorList>
    </citation>
    <scope>NUCLEOTIDE SEQUENCE [LARGE SCALE GENOMIC DNA]</scope>
    <source>
        <strain>cv. Columbia</strain>
    </source>
</reference>
<reference key="3">
    <citation type="journal article" date="2017" name="Plant J.">
        <title>Araport11: a complete reannotation of the Arabidopsis thaliana reference genome.</title>
        <authorList>
            <person name="Cheng C.Y."/>
            <person name="Krishnakumar V."/>
            <person name="Chan A.P."/>
            <person name="Thibaud-Nissen F."/>
            <person name="Schobel S."/>
            <person name="Town C.D."/>
        </authorList>
    </citation>
    <scope>GENOME REANNOTATION</scope>
    <source>
        <strain>cv. Columbia</strain>
    </source>
</reference>
<reference key="4">
    <citation type="journal article" date="2006" name="Proc. Natl. Acad. Sci. U.S.A.">
        <title>Defective RNA processing enhances RNA silencing and influences flowering of Arabidopsis.</title>
        <authorList>
            <person name="Herr A.J."/>
            <person name="Molnar A."/>
            <person name="Jones A."/>
            <person name="Baulcombe D.C."/>
        </authorList>
    </citation>
    <scope>IDENTIFICATION</scope>
</reference>
<reference key="5">
    <citation type="journal article" date="2008" name="J. Proteome Res.">
        <title>Site-specific phosphorylation profiling of Arabidopsis proteins by mass spectrometry and peptide chip analysis.</title>
        <authorList>
            <person name="de la Fuente van Bentem S."/>
            <person name="Anrather D."/>
            <person name="Dohnal I."/>
            <person name="Roitinger E."/>
            <person name="Csaszar E."/>
            <person name="Joore J."/>
            <person name="Buijnink J."/>
            <person name="Carreri A."/>
            <person name="Forzani C."/>
            <person name="Lorkovic Z.J."/>
            <person name="Barta A."/>
            <person name="Lecourieux D."/>
            <person name="Verhounig A."/>
            <person name="Jonak C."/>
            <person name="Hirt H."/>
        </authorList>
    </citation>
    <scope>PHOSPHORYLATION [LARGE SCALE ANALYSIS] AT SER-411</scope>
    <scope>IDENTIFICATION BY MASS SPECTROMETRY [LARGE SCALE ANALYSIS]</scope>
    <source>
        <tissue>Root</tissue>
    </source>
</reference>
<reference key="6">
    <citation type="journal article" date="2009" name="J. Proteomics">
        <title>Phosphoproteomic analysis of nuclei-enriched fractions from Arabidopsis thaliana.</title>
        <authorList>
            <person name="Jones A.M.E."/>
            <person name="MacLean D."/>
            <person name="Studholme D.J."/>
            <person name="Serna-Sanz A."/>
            <person name="Andreasson E."/>
            <person name="Rathjen J.P."/>
            <person name="Peck S.C."/>
        </authorList>
    </citation>
    <scope>SUBCELLULAR LOCATION</scope>
    <scope>PHOSPHORYLATION [LARGE SCALE ANALYSIS] AT SER-411</scope>
    <scope>IDENTIFICATION BY MASS SPECTROMETRY [LARGE SCALE ANALYSIS]</scope>
    <source>
        <strain>cv. Columbia</strain>
    </source>
</reference>
<reference key="7">
    <citation type="journal article" date="2009" name="Plant Physiol.">
        <title>Large-scale Arabidopsis phosphoproteome profiling reveals novel chloroplast kinase substrates and phosphorylation networks.</title>
        <authorList>
            <person name="Reiland S."/>
            <person name="Messerli G."/>
            <person name="Baerenfaller K."/>
            <person name="Gerrits B."/>
            <person name="Endler A."/>
            <person name="Grossmann J."/>
            <person name="Gruissem W."/>
            <person name="Baginsky S."/>
        </authorList>
    </citation>
    <scope>PHOSPHORYLATION [LARGE SCALE ANALYSIS] AT SER-411</scope>
    <scope>IDENTIFICATION BY MASS SPECTROMETRY [LARGE SCALE ANALYSIS]</scope>
</reference>
<reference key="8">
    <citation type="journal article" date="2013" name="PLoS ONE">
        <title>Genome-wide comparative in silico analysis of the RNA helicase gene family in Zea mays and Glycine max: a comparison with Arabidopsis and Oryza sativa.</title>
        <authorList>
            <person name="Xu R."/>
            <person name="Zhang S."/>
            <person name="Huang J."/>
            <person name="Zheng C."/>
        </authorList>
    </citation>
    <scope>GENE FAMILY</scope>
</reference>
<organism>
    <name type="scientific">Arabidopsis thaliana</name>
    <name type="common">Mouse-ear cress</name>
    <dbReference type="NCBI Taxonomy" id="3702"/>
    <lineage>
        <taxon>Eukaryota</taxon>
        <taxon>Viridiplantae</taxon>
        <taxon>Streptophyta</taxon>
        <taxon>Embryophyta</taxon>
        <taxon>Tracheophyta</taxon>
        <taxon>Spermatophyta</taxon>
        <taxon>Magnoliopsida</taxon>
        <taxon>eudicotyledons</taxon>
        <taxon>Gunneridae</taxon>
        <taxon>Pentapetalae</taxon>
        <taxon>rosids</taxon>
        <taxon>malvids</taxon>
        <taxon>Brassicales</taxon>
        <taxon>Brassicaceae</taxon>
        <taxon>Camelineae</taxon>
        <taxon>Arabidopsis</taxon>
    </lineage>
</organism>
<gene>
    <name evidence="8" type="ordered locus">At3g26560</name>
    <name evidence="9" type="ORF">MFE16.8</name>
</gene>
<feature type="chain" id="PRO_0000055132" description="Probable pre-mRNA-splicing factor ATP-dependent RNA helicase DEAH5">
    <location>
        <begin position="1"/>
        <end position="1168"/>
    </location>
</feature>
<feature type="domain" description="S1 motif" evidence="1">
    <location>
        <begin position="214"/>
        <end position="283"/>
    </location>
</feature>
<feature type="domain" description="Helicase ATP-binding" evidence="2">
    <location>
        <begin position="525"/>
        <end position="688"/>
    </location>
</feature>
<feature type="domain" description="Helicase C-terminal" evidence="3">
    <location>
        <begin position="706"/>
        <end position="886"/>
    </location>
</feature>
<feature type="region of interest" description="Disordered" evidence="4">
    <location>
        <begin position="76"/>
        <end position="206"/>
    </location>
</feature>
<feature type="region of interest" description="Disordered" evidence="4">
    <location>
        <begin position="289"/>
        <end position="326"/>
    </location>
</feature>
<feature type="short sequence motif" description="DEAH box" evidence="2">
    <location>
        <begin position="635"/>
        <end position="638"/>
    </location>
</feature>
<feature type="compositionally biased region" description="Basic and acidic residues" evidence="4">
    <location>
        <begin position="81"/>
        <end position="172"/>
    </location>
</feature>
<feature type="compositionally biased region" description="Basic and acidic residues" evidence="4">
    <location>
        <begin position="180"/>
        <end position="206"/>
    </location>
</feature>
<feature type="binding site" evidence="2">
    <location>
        <begin position="538"/>
        <end position="545"/>
    </location>
    <ligand>
        <name>ATP</name>
        <dbReference type="ChEBI" id="CHEBI:30616"/>
    </ligand>
</feature>
<feature type="modified residue" description="Phosphoserine" evidence="10 11 12">
    <location>
        <position position="411"/>
    </location>
</feature>
<evidence type="ECO:0000255" key="1">
    <source>
        <dbReference type="PROSITE-ProRule" id="PRU00180"/>
    </source>
</evidence>
<evidence type="ECO:0000255" key="2">
    <source>
        <dbReference type="PROSITE-ProRule" id="PRU00541"/>
    </source>
</evidence>
<evidence type="ECO:0000255" key="3">
    <source>
        <dbReference type="PROSITE-ProRule" id="PRU00542"/>
    </source>
</evidence>
<evidence type="ECO:0000256" key="4">
    <source>
        <dbReference type="SAM" id="MobiDB-lite"/>
    </source>
</evidence>
<evidence type="ECO:0000269" key="5">
    <source>
    </source>
</evidence>
<evidence type="ECO:0000303" key="6">
    <source>
    </source>
</evidence>
<evidence type="ECO:0000305" key="7"/>
<evidence type="ECO:0000312" key="8">
    <source>
        <dbReference type="Araport" id="AT3G26560"/>
    </source>
</evidence>
<evidence type="ECO:0000312" key="9">
    <source>
        <dbReference type="EMBL" id="BAB01838.1"/>
    </source>
</evidence>
<evidence type="ECO:0007744" key="10">
    <source>
    </source>
</evidence>
<evidence type="ECO:0007744" key="11">
    <source>
    </source>
</evidence>
<evidence type="ECO:0007744" key="12">
    <source>
    </source>
</evidence>
<keyword id="KW-0067">ATP-binding</keyword>
<keyword id="KW-0347">Helicase</keyword>
<keyword id="KW-0378">Hydrolase</keyword>
<keyword id="KW-0507">mRNA processing</keyword>
<keyword id="KW-0508">mRNA splicing</keyword>
<keyword id="KW-0547">Nucleotide-binding</keyword>
<keyword id="KW-0539">Nucleus</keyword>
<keyword id="KW-0597">Phosphoprotein</keyword>
<keyword id="KW-1185">Reference proteome</keyword>
<keyword id="KW-0747">Spliceosome</keyword>
<comment type="function">
    <text evidence="7">May be involved in pre-mRNA splicing.</text>
</comment>
<comment type="catalytic activity">
    <reaction>
        <text>ATP + H2O = ADP + phosphate + H(+)</text>
        <dbReference type="Rhea" id="RHEA:13065"/>
        <dbReference type="ChEBI" id="CHEBI:15377"/>
        <dbReference type="ChEBI" id="CHEBI:15378"/>
        <dbReference type="ChEBI" id="CHEBI:30616"/>
        <dbReference type="ChEBI" id="CHEBI:43474"/>
        <dbReference type="ChEBI" id="CHEBI:456216"/>
        <dbReference type="EC" id="3.6.4.13"/>
    </reaction>
</comment>
<comment type="subcellular location">
    <subcellularLocation>
        <location evidence="5">Nucleus</location>
    </subcellularLocation>
</comment>
<comment type="similarity">
    <text evidence="7">Belongs to the DEAD box helicase family. DEAH subfamily. PRP22 sub-subfamily.</text>
</comment>
<comment type="sequence caution" evidence="7">
    <conflict type="frameshift">
        <sequence resource="EMBL-CDS" id="CAA66613"/>
    </conflict>
</comment>
<comment type="sequence caution" evidence="7">
    <conflict type="frameshift">
        <sequence resource="EMBL-CDS" id="CAA66825"/>
    </conflict>
</comment>